<comment type="function">
    <text evidence="1">The UvrABC repair system catalyzes the recognition and processing of DNA lesions. UvrC both incises the 5' and 3' sides of the lesion. The N-terminal half is responsible for the 3' incision and the C-terminal half is responsible for the 5' incision.</text>
</comment>
<comment type="subunit">
    <text evidence="1">Interacts with UvrB in an incision complex.</text>
</comment>
<comment type="subcellular location">
    <subcellularLocation>
        <location evidence="1">Cytoplasm</location>
    </subcellularLocation>
</comment>
<comment type="similarity">
    <text evidence="1">Belongs to the UvrC family.</text>
</comment>
<comment type="sequence caution" evidence="3">
    <conflict type="erroneous initiation">
        <sequence resource="EMBL-CDS" id="AAU50378"/>
    </conflict>
</comment>
<feature type="chain" id="PRO_0000264877" description="UvrABC system protein C">
    <location>
        <begin position="1"/>
        <end position="747"/>
    </location>
</feature>
<feature type="domain" description="GIY-YIG" evidence="1">
    <location>
        <begin position="22"/>
        <end position="100"/>
    </location>
</feature>
<feature type="domain" description="UVR" evidence="1">
    <location>
        <begin position="209"/>
        <end position="244"/>
    </location>
</feature>
<feature type="region of interest" description="Disordered" evidence="2">
    <location>
        <begin position="363"/>
        <end position="400"/>
    </location>
</feature>
<feature type="compositionally biased region" description="Basic and acidic residues" evidence="2">
    <location>
        <begin position="370"/>
        <end position="387"/>
    </location>
</feature>
<feature type="compositionally biased region" description="Low complexity" evidence="2">
    <location>
        <begin position="388"/>
        <end position="400"/>
    </location>
</feature>
<protein>
    <recommendedName>
        <fullName evidence="1">UvrABC system protein C</fullName>
        <shortName evidence="1">Protein UvrC</shortName>
    </recommendedName>
    <alternativeName>
        <fullName evidence="1">Excinuclease ABC subunit C</fullName>
    </alternativeName>
</protein>
<proteinExistence type="inferred from homology"/>
<gene>
    <name evidence="1" type="primary">uvrC</name>
    <name type="ordered locus">BMA0552</name>
</gene>
<evidence type="ECO:0000255" key="1">
    <source>
        <dbReference type="HAMAP-Rule" id="MF_00203"/>
    </source>
</evidence>
<evidence type="ECO:0000256" key="2">
    <source>
        <dbReference type="SAM" id="MobiDB-lite"/>
    </source>
</evidence>
<evidence type="ECO:0000305" key="3"/>
<organism>
    <name type="scientific">Burkholderia mallei (strain ATCC 23344)</name>
    <dbReference type="NCBI Taxonomy" id="243160"/>
    <lineage>
        <taxon>Bacteria</taxon>
        <taxon>Pseudomonadati</taxon>
        <taxon>Pseudomonadota</taxon>
        <taxon>Betaproteobacteria</taxon>
        <taxon>Burkholderiales</taxon>
        <taxon>Burkholderiaceae</taxon>
        <taxon>Burkholderia</taxon>
        <taxon>pseudomallei group</taxon>
    </lineage>
</organism>
<keyword id="KW-0963">Cytoplasm</keyword>
<keyword id="KW-0227">DNA damage</keyword>
<keyword id="KW-0228">DNA excision</keyword>
<keyword id="KW-0234">DNA repair</keyword>
<keyword id="KW-0267">Excision nuclease</keyword>
<keyword id="KW-1185">Reference proteome</keyword>
<keyword id="KW-0742">SOS response</keyword>
<reference key="1">
    <citation type="journal article" date="2004" name="Proc. Natl. Acad. Sci. U.S.A.">
        <title>Structural flexibility in the Burkholderia mallei genome.</title>
        <authorList>
            <person name="Nierman W.C."/>
            <person name="DeShazer D."/>
            <person name="Kim H.S."/>
            <person name="Tettelin H."/>
            <person name="Nelson K.E."/>
            <person name="Feldblyum T.V."/>
            <person name="Ulrich R.L."/>
            <person name="Ronning C.M."/>
            <person name="Brinkac L.M."/>
            <person name="Daugherty S.C."/>
            <person name="Davidsen T.D."/>
            <person name="DeBoy R.T."/>
            <person name="Dimitrov G."/>
            <person name="Dodson R.J."/>
            <person name="Durkin A.S."/>
            <person name="Gwinn M.L."/>
            <person name="Haft D.H."/>
            <person name="Khouri H.M."/>
            <person name="Kolonay J.F."/>
            <person name="Madupu R."/>
            <person name="Mohammoud Y."/>
            <person name="Nelson W.C."/>
            <person name="Radune D."/>
            <person name="Romero C.M."/>
            <person name="Sarria S."/>
            <person name="Selengut J."/>
            <person name="Shamblin C."/>
            <person name="Sullivan S.A."/>
            <person name="White O."/>
            <person name="Yu Y."/>
            <person name="Zafar N."/>
            <person name="Zhou L."/>
            <person name="Fraser C.M."/>
        </authorList>
    </citation>
    <scope>NUCLEOTIDE SEQUENCE [LARGE SCALE GENOMIC DNA]</scope>
    <source>
        <strain>ATCC 23344</strain>
    </source>
</reference>
<dbReference type="EMBL" id="CP000010">
    <property type="protein sequence ID" value="AAU50378.1"/>
    <property type="status" value="ALT_INIT"/>
    <property type="molecule type" value="Genomic_DNA"/>
</dbReference>
<dbReference type="RefSeq" id="WP_004192853.1">
    <property type="nucleotide sequence ID" value="NC_006348.1"/>
</dbReference>
<dbReference type="RefSeq" id="YP_102348.1">
    <property type="nucleotide sequence ID" value="NC_006348.1"/>
</dbReference>
<dbReference type="SMR" id="Q62LS1"/>
<dbReference type="GeneID" id="92978320"/>
<dbReference type="KEGG" id="bma:BMA0552"/>
<dbReference type="PATRIC" id="fig|243160.12.peg.566"/>
<dbReference type="eggNOG" id="COG0322">
    <property type="taxonomic scope" value="Bacteria"/>
</dbReference>
<dbReference type="HOGENOM" id="CLU_014841_3_2_4"/>
<dbReference type="Proteomes" id="UP000006693">
    <property type="component" value="Chromosome 1"/>
</dbReference>
<dbReference type="GO" id="GO:0005737">
    <property type="term" value="C:cytoplasm"/>
    <property type="evidence" value="ECO:0007669"/>
    <property type="project" value="UniProtKB-SubCell"/>
</dbReference>
<dbReference type="GO" id="GO:0009380">
    <property type="term" value="C:excinuclease repair complex"/>
    <property type="evidence" value="ECO:0007669"/>
    <property type="project" value="InterPro"/>
</dbReference>
<dbReference type="GO" id="GO:0003677">
    <property type="term" value="F:DNA binding"/>
    <property type="evidence" value="ECO:0007669"/>
    <property type="project" value="UniProtKB-UniRule"/>
</dbReference>
<dbReference type="GO" id="GO:0009381">
    <property type="term" value="F:excinuclease ABC activity"/>
    <property type="evidence" value="ECO:0007669"/>
    <property type="project" value="UniProtKB-UniRule"/>
</dbReference>
<dbReference type="GO" id="GO:0006289">
    <property type="term" value="P:nucleotide-excision repair"/>
    <property type="evidence" value="ECO:0007669"/>
    <property type="project" value="UniProtKB-UniRule"/>
</dbReference>
<dbReference type="GO" id="GO:0009432">
    <property type="term" value="P:SOS response"/>
    <property type="evidence" value="ECO:0007669"/>
    <property type="project" value="UniProtKB-UniRule"/>
</dbReference>
<dbReference type="CDD" id="cd10434">
    <property type="entry name" value="GIY-YIG_UvrC_Cho"/>
    <property type="match status" value="1"/>
</dbReference>
<dbReference type="FunFam" id="3.30.420.340:FF:000001">
    <property type="entry name" value="UvrABC system protein C"/>
    <property type="match status" value="1"/>
</dbReference>
<dbReference type="FunFam" id="3.40.1440.10:FF:000001">
    <property type="entry name" value="UvrABC system protein C"/>
    <property type="match status" value="1"/>
</dbReference>
<dbReference type="Gene3D" id="1.10.150.20">
    <property type="entry name" value="5' to 3' exonuclease, C-terminal subdomain"/>
    <property type="match status" value="1"/>
</dbReference>
<dbReference type="Gene3D" id="3.40.1440.10">
    <property type="entry name" value="GIY-YIG endonuclease"/>
    <property type="match status" value="1"/>
</dbReference>
<dbReference type="Gene3D" id="4.10.860.10">
    <property type="entry name" value="UVR domain"/>
    <property type="match status" value="1"/>
</dbReference>
<dbReference type="Gene3D" id="3.30.420.340">
    <property type="entry name" value="UvrC, RNAse H endonuclease domain"/>
    <property type="match status" value="1"/>
</dbReference>
<dbReference type="HAMAP" id="MF_00203">
    <property type="entry name" value="UvrC"/>
    <property type="match status" value="1"/>
</dbReference>
<dbReference type="InterPro" id="IPR000305">
    <property type="entry name" value="GIY-YIG_endonuc"/>
</dbReference>
<dbReference type="InterPro" id="IPR035901">
    <property type="entry name" value="GIY-YIG_endonuc_sf"/>
</dbReference>
<dbReference type="InterPro" id="IPR047296">
    <property type="entry name" value="GIY-YIG_UvrC_Cho"/>
</dbReference>
<dbReference type="InterPro" id="IPR003583">
    <property type="entry name" value="Hlx-hairpin-Hlx_DNA-bd_motif"/>
</dbReference>
<dbReference type="InterPro" id="IPR010994">
    <property type="entry name" value="RuvA_2-like"/>
</dbReference>
<dbReference type="InterPro" id="IPR001943">
    <property type="entry name" value="UVR_dom"/>
</dbReference>
<dbReference type="InterPro" id="IPR036876">
    <property type="entry name" value="UVR_dom_sf"/>
</dbReference>
<dbReference type="InterPro" id="IPR050066">
    <property type="entry name" value="UvrABC_protein_C"/>
</dbReference>
<dbReference type="InterPro" id="IPR004791">
    <property type="entry name" value="UvrC"/>
</dbReference>
<dbReference type="InterPro" id="IPR001162">
    <property type="entry name" value="UvrC_RNase_H_dom"/>
</dbReference>
<dbReference type="InterPro" id="IPR038476">
    <property type="entry name" value="UvrC_RNase_H_dom_sf"/>
</dbReference>
<dbReference type="NCBIfam" id="NF001824">
    <property type="entry name" value="PRK00558.1-5"/>
    <property type="match status" value="1"/>
</dbReference>
<dbReference type="NCBIfam" id="TIGR00194">
    <property type="entry name" value="uvrC"/>
    <property type="match status" value="1"/>
</dbReference>
<dbReference type="PANTHER" id="PTHR30562:SF1">
    <property type="entry name" value="UVRABC SYSTEM PROTEIN C"/>
    <property type="match status" value="1"/>
</dbReference>
<dbReference type="PANTHER" id="PTHR30562">
    <property type="entry name" value="UVRC/OXIDOREDUCTASE"/>
    <property type="match status" value="1"/>
</dbReference>
<dbReference type="Pfam" id="PF01541">
    <property type="entry name" value="GIY-YIG"/>
    <property type="match status" value="1"/>
</dbReference>
<dbReference type="Pfam" id="PF14520">
    <property type="entry name" value="HHH_5"/>
    <property type="match status" value="1"/>
</dbReference>
<dbReference type="Pfam" id="PF02151">
    <property type="entry name" value="UVR"/>
    <property type="match status" value="1"/>
</dbReference>
<dbReference type="Pfam" id="PF22920">
    <property type="entry name" value="UvrC_RNaseH"/>
    <property type="match status" value="2"/>
</dbReference>
<dbReference type="Pfam" id="PF08459">
    <property type="entry name" value="UvrC_RNaseH_dom"/>
    <property type="match status" value="1"/>
</dbReference>
<dbReference type="SMART" id="SM00465">
    <property type="entry name" value="GIYc"/>
    <property type="match status" value="1"/>
</dbReference>
<dbReference type="SMART" id="SM00278">
    <property type="entry name" value="HhH1"/>
    <property type="match status" value="2"/>
</dbReference>
<dbReference type="SUPFAM" id="SSF46600">
    <property type="entry name" value="C-terminal UvrC-binding domain of UvrB"/>
    <property type="match status" value="1"/>
</dbReference>
<dbReference type="SUPFAM" id="SSF82771">
    <property type="entry name" value="GIY-YIG endonuclease"/>
    <property type="match status" value="1"/>
</dbReference>
<dbReference type="SUPFAM" id="SSF47781">
    <property type="entry name" value="RuvA domain 2-like"/>
    <property type="match status" value="1"/>
</dbReference>
<dbReference type="PROSITE" id="PS50164">
    <property type="entry name" value="GIY_YIG"/>
    <property type="match status" value="1"/>
</dbReference>
<dbReference type="PROSITE" id="PS50151">
    <property type="entry name" value="UVR"/>
    <property type="match status" value="1"/>
</dbReference>
<dbReference type="PROSITE" id="PS50165">
    <property type="entry name" value="UVRC"/>
    <property type="match status" value="1"/>
</dbReference>
<sequence length="747" mass="80836">MTSPDAPESRFEPKPILAQLPHLPGVYRYYDVQDAVLYVGKARDLKKRVSSYFTKTQLSPRIAMMITRIARIETTVTRSEAEALLLENNLIKALAPRYNILFRDDKSYPYLKLTGHRFPRMAYYRGAVDKKNQYFGPFPSAWAVRESIQILQRVFQLRTCEDSVFNNRTRPCLLHQIGRCSAPCVGAIGEEDYARDVDNASRFLLGRQGEVMGELERKMHAFAAELKFEQAAAVRNQMSSLAKVLHQQAIDVGGDSDVDILAVVAQGGRVCVNLAMVRGGRHLGDKAYFPAHVETALALAGDIEALAGEGAGDGVQAAAQPAQAPLATDADATDAAATEAKTVTAAAAARAGARTAQAAGARAAASAEGDVERRAEGETHARADAREAAALPDGAAAAQEADADVDAAPLETEVLEAFIAQHYLGNRVPPVLVVSHAPANRELIDLLVEQAGHKVAVVRQPQGQKRAWLTMAEQNARLALARLLSEQGSQQARTRSLADVLGYESDDLAQLRIECFDISHTMGEATQASCVVYHHHRMQSSEYRRYNIAGITPGDDYAAMRQVLTRRYEKMVEEAAAEASADEAAGIDGNAVHAAASAGRLPNVVLIDGGRGQVEIARQVFSELGLDISMLVGVAKGEGRKVGLETLIFADGRAPLELGKESAALMLVAQIRDEAHRFAITGMRAKRAKTRQTSRLEELEGVGAKRRQRLLARFGGLRGVVAASVDELASVEGISRALAEQIYRQLH</sequence>
<accession>Q62LS1</accession>
<name>UVRC_BURMA</name>